<evidence type="ECO:0000250" key="1">
    <source>
        <dbReference type="UniProtKB" id="Q65156"/>
    </source>
</evidence>
<evidence type="ECO:0000305" key="2"/>
<reference key="1">
    <citation type="submission" date="2003-03" db="EMBL/GenBank/DDBJ databases">
        <title>African swine fever virus genomes.</title>
        <authorList>
            <person name="Kutish G.F."/>
            <person name="Rock D.L."/>
        </authorList>
    </citation>
    <scope>NUCLEOTIDE SEQUENCE [LARGE SCALE GENOMIC DNA]</scope>
</reference>
<keyword id="KW-0426">Late protein</keyword>
<keyword id="KW-0946">Virion</keyword>
<sequence>MTKLAQWMFEQYVKDLNLKNRGSPSFRKWLTLQPSLLRYSGVMRANAFDILKYGYPMQQSGYTVATLEIHFKNIRSSFANIYWNRDSEEPEYVCCCATYQSHDGEYRYRFVWYQPFIEAYNAIETALDSLETIILNLIAARDLDFVVHIFPYNKGHEDYLASTQLILKIFIATLLMDILRIKDNTLDVHLNSDYIIVMERLWPHIKDAIEQFFEAHKDLLGYLIAFRNGGNFAGSLRPSCGQKIVPLTIREALQINDINLAVWREVFIMQECSDLVINGIAPCFPIFNTWTYLQGINQIFFENTSLQEKFKKDFIARELSKEIIKGQKILNDIEFKKLSLHQIQYMESFLLMSDVAIMITTEYVGYTLQSLPGIISRSSYLSPIVKNILMDEDSFMSLLFDLCYGAYVLHKKENVIHADLHLNNMTYYHFNPTSFTDRNKPGKYTLKVNNPVIAFITGPKVETETYVFKHIDGFGCIIDFSRAIMGPNHAIKLERQYGLAFVNTFYRNQSEHILKVLRYYFPEMLTNRENEIQGVILSNFNFFFNSITAIDFYAIARNLRSMLSLDYLHTSEVKRNVEISQTFLDTCQFLEEKAVEFLFKNLHTVLSGKPVEKTAGDVLLPIVFKKFLYPNIPKNILRSFTVIDVYNYNNIKRYSGKAIQTFPPWAQTKEILTHAEGRTFEDIFPRGELVFKKAYAENNYLDKILQRIREQLANENL</sequence>
<comment type="subcellular location">
    <subcellularLocation>
        <location evidence="1">Virion</location>
    </subcellularLocation>
</comment>
<comment type="induction">
    <text evidence="2">Expressed in the late phase of the viral replicative cycle.</text>
</comment>
<comment type="similarity">
    <text evidence="2">Belongs to the asfivirus C717R family.</text>
</comment>
<feature type="chain" id="PRO_0000373722" description="Uncharacterized protein C717R">
    <location>
        <begin position="1"/>
        <end position="717"/>
    </location>
</feature>
<protein>
    <recommendedName>
        <fullName>Uncharacterized protein C717R</fullName>
        <shortName>pC717R</shortName>
    </recommendedName>
</protein>
<accession>P0CAJ6</accession>
<gene>
    <name type="ordered locus">Mal-072</name>
</gene>
<dbReference type="EMBL" id="AY261361">
    <property type="status" value="NOT_ANNOTATED_CDS"/>
    <property type="molecule type" value="Genomic_DNA"/>
</dbReference>
<dbReference type="Proteomes" id="UP000000860">
    <property type="component" value="Segment"/>
</dbReference>
<dbReference type="GO" id="GO:0044423">
    <property type="term" value="C:virion component"/>
    <property type="evidence" value="ECO:0007669"/>
    <property type="project" value="UniProtKB-KW"/>
</dbReference>
<dbReference type="InterPro" id="IPR011009">
    <property type="entry name" value="Kinase-like_dom_sf"/>
</dbReference>
<dbReference type="SUPFAM" id="SSF56112">
    <property type="entry name" value="Protein kinase-like (PK-like)"/>
    <property type="match status" value="1"/>
</dbReference>
<organism>
    <name type="scientific">African swine fever virus (isolate Tick/Malawi/Lil 20-1/1983)</name>
    <name type="common">ASFV</name>
    <dbReference type="NCBI Taxonomy" id="10500"/>
    <lineage>
        <taxon>Viruses</taxon>
        <taxon>Varidnaviria</taxon>
        <taxon>Bamfordvirae</taxon>
        <taxon>Nucleocytoviricota</taxon>
        <taxon>Pokkesviricetes</taxon>
        <taxon>Asfuvirales</taxon>
        <taxon>Asfarviridae</taxon>
        <taxon>Asfivirus</taxon>
        <taxon>African swine fever virus</taxon>
    </lineage>
</organism>
<name>VF717_ASFM2</name>
<proteinExistence type="inferred from homology"/>
<organismHost>
    <name type="scientific">Ornithodoros</name>
    <name type="common">relapsing fever ticks</name>
    <dbReference type="NCBI Taxonomy" id="6937"/>
</organismHost>
<organismHost>
    <name type="scientific">Phacochoerus aethiopicus</name>
    <name type="common">Warthog</name>
    <dbReference type="NCBI Taxonomy" id="85517"/>
</organismHost>
<organismHost>
    <name type="scientific">Phacochoerus africanus</name>
    <name type="common">Warthog</name>
    <dbReference type="NCBI Taxonomy" id="41426"/>
</organismHost>
<organismHost>
    <name type="scientific">Potamochoerus larvatus</name>
    <name type="common">Bushpig</name>
    <dbReference type="NCBI Taxonomy" id="273792"/>
</organismHost>
<organismHost>
    <name type="scientific">Sus scrofa</name>
    <name type="common">Pig</name>
    <dbReference type="NCBI Taxonomy" id="9823"/>
</organismHost>